<protein>
    <recommendedName>
        <fullName>Protein MGF 360-4L</fullName>
    </recommendedName>
</protein>
<dbReference type="EMBL" id="AY261366">
    <property type="status" value="NOT_ANNOTATED_CDS"/>
    <property type="molecule type" value="Genomic_DNA"/>
</dbReference>
<dbReference type="SMR" id="P0C9M8"/>
<dbReference type="Proteomes" id="UP000000858">
    <property type="component" value="Segment"/>
</dbReference>
<dbReference type="GO" id="GO:0042330">
    <property type="term" value="P:taxis"/>
    <property type="evidence" value="ECO:0007669"/>
    <property type="project" value="InterPro"/>
</dbReference>
<dbReference type="InterPro" id="IPR002595">
    <property type="entry name" value="ASFV_MGF360"/>
</dbReference>
<dbReference type="Pfam" id="PF01671">
    <property type="entry name" value="ASFV_360"/>
    <property type="match status" value="1"/>
</dbReference>
<gene>
    <name type="ordered locus">War-023</name>
</gene>
<reference key="1">
    <citation type="submission" date="2003-03" db="EMBL/GenBank/DDBJ databases">
        <title>African swine fever virus genomes.</title>
        <authorList>
            <person name="Kutish G.F."/>
            <person name="Rock D.L."/>
        </authorList>
    </citation>
    <scope>NUCLEOTIDE SEQUENCE [LARGE SCALE GENOMIC DNA]</scope>
</reference>
<evidence type="ECO:0000250" key="1"/>
<evidence type="ECO:0000305" key="2"/>
<organism>
    <name type="scientific">African swine fever virus (isolate Warthog/Namibia/Wart80/1980)</name>
    <name type="common">ASFV</name>
    <dbReference type="NCBI Taxonomy" id="561444"/>
    <lineage>
        <taxon>Viruses</taxon>
        <taxon>Varidnaviria</taxon>
        <taxon>Bamfordvirae</taxon>
        <taxon>Nucleocytoviricota</taxon>
        <taxon>Pokkesviricetes</taxon>
        <taxon>Asfuvirales</taxon>
        <taxon>Asfarviridae</taxon>
        <taxon>Asfivirus</taxon>
        <taxon>African swine fever virus</taxon>
    </lineage>
</organism>
<feature type="chain" id="PRO_0000373254" description="Protein MGF 360-4L">
    <location>
        <begin position="1"/>
        <end position="386"/>
    </location>
</feature>
<proteinExistence type="inferred from homology"/>
<sequence>MNSLQVLTKKVLIETKAFSNYHEDDIFILQQLGLWWHNGPIGFCKQCKMVTSGSMSCSDDDSYELDRALVKAVKENQTDLIKLFVLWGAEINFGIMCAKTKQTKDLCIQLGADPQFLDVGLYNMFVYLVKRKKVLLAIEIYYDNILILDSFDSYDFHLLIDFVYNRFILYLDEKDEEMTRNALVLKFWYKFAIDFKLVKPIRYLSKKFPHLDIWRLKAAIYLGNIDEVHRAYFQENIRLDPNDMMLLACMYPQNKLGIYYCFALGADIDNALDILLRFDETNKQIHRETRGEIIFNIERGYLINIYFCISLGANPYIKKIQDTIKQKHSNIMILLFSKKKLLSPHSVLQNKILDPSDVYKMISTYENTESFYPFSSLAVKLIQQAK</sequence>
<comment type="function">
    <text evidence="1">Plays a role in virus cell tropism, and may be required for efficient virus replication in macrophages.</text>
</comment>
<comment type="similarity">
    <text evidence="2">Belongs to the asfivirus MGF 360 family.</text>
</comment>
<name>3604L_ASFWA</name>
<organismHost>
    <name type="scientific">Ornithodoros</name>
    <name type="common">relapsing fever ticks</name>
    <dbReference type="NCBI Taxonomy" id="6937"/>
</organismHost>
<organismHost>
    <name type="scientific">Phacochoerus aethiopicus</name>
    <name type="common">Warthog</name>
    <dbReference type="NCBI Taxonomy" id="85517"/>
</organismHost>
<organismHost>
    <name type="scientific">Phacochoerus africanus</name>
    <name type="common">Warthog</name>
    <dbReference type="NCBI Taxonomy" id="41426"/>
</organismHost>
<organismHost>
    <name type="scientific">Potamochoerus larvatus</name>
    <name type="common">Bushpig</name>
    <dbReference type="NCBI Taxonomy" id="273792"/>
</organismHost>
<organismHost>
    <name type="scientific">Sus scrofa</name>
    <name type="common">Pig</name>
    <dbReference type="NCBI Taxonomy" id="9823"/>
</organismHost>
<accession>P0C9M8</accession>